<name>Y273_HALLT</name>
<dbReference type="EMBL" id="CP001365">
    <property type="protein sequence ID" value="ACM55878.1"/>
    <property type="molecule type" value="Genomic_DNA"/>
</dbReference>
<dbReference type="RefSeq" id="WP_012659519.1">
    <property type="nucleotide sequence ID" value="NC_012029.1"/>
</dbReference>
<dbReference type="SMR" id="B9LS33"/>
<dbReference type="GeneID" id="7401199"/>
<dbReference type="KEGG" id="hla:Hlac_0273"/>
<dbReference type="eggNOG" id="arCOG04152">
    <property type="taxonomic scope" value="Archaea"/>
</dbReference>
<dbReference type="HOGENOM" id="CLU_075726_0_0_2"/>
<dbReference type="Proteomes" id="UP000000740">
    <property type="component" value="Chromosome 1"/>
</dbReference>
<dbReference type="GO" id="GO:0003677">
    <property type="term" value="F:DNA binding"/>
    <property type="evidence" value="ECO:0007669"/>
    <property type="project" value="UniProtKB-KW"/>
</dbReference>
<dbReference type="GO" id="GO:0003700">
    <property type="term" value="F:DNA-binding transcription factor activity"/>
    <property type="evidence" value="ECO:0007669"/>
    <property type="project" value="UniProtKB-UniRule"/>
</dbReference>
<dbReference type="CDD" id="cd00093">
    <property type="entry name" value="HTH_XRE"/>
    <property type="match status" value="1"/>
</dbReference>
<dbReference type="Gene3D" id="1.10.260.40">
    <property type="entry name" value="lambda repressor-like DNA-binding domains"/>
    <property type="match status" value="1"/>
</dbReference>
<dbReference type="HAMAP" id="MF_00584">
    <property type="entry name" value="HTH_type_cro_C1"/>
    <property type="match status" value="1"/>
</dbReference>
<dbReference type="InterPro" id="IPR020886">
    <property type="entry name" value="Arc_TR_HTH"/>
</dbReference>
<dbReference type="InterPro" id="IPR001387">
    <property type="entry name" value="Cro/C1-type_HTH"/>
</dbReference>
<dbReference type="InterPro" id="IPR010982">
    <property type="entry name" value="Lambda_DNA-bd_dom_sf"/>
</dbReference>
<dbReference type="NCBIfam" id="NF003162">
    <property type="entry name" value="PRK04140.1"/>
    <property type="match status" value="1"/>
</dbReference>
<dbReference type="Pfam" id="PF01381">
    <property type="entry name" value="HTH_3"/>
    <property type="match status" value="1"/>
</dbReference>
<dbReference type="SMART" id="SM00530">
    <property type="entry name" value="HTH_XRE"/>
    <property type="match status" value="1"/>
</dbReference>
<dbReference type="SUPFAM" id="SSF47413">
    <property type="entry name" value="lambda repressor-like DNA-binding domains"/>
    <property type="match status" value="1"/>
</dbReference>
<dbReference type="PROSITE" id="PS50943">
    <property type="entry name" value="HTH_CROC1"/>
    <property type="match status" value="1"/>
</dbReference>
<proteinExistence type="inferred from homology"/>
<reference key="1">
    <citation type="journal article" date="2016" name="Stand. Genomic Sci.">
        <title>Complete genome sequence of the Antarctic Halorubrum lacusprofundi type strain ACAM 34.</title>
        <authorList>
            <person name="Anderson I.J."/>
            <person name="DasSarma P."/>
            <person name="Lucas S."/>
            <person name="Copeland A."/>
            <person name="Lapidus A."/>
            <person name="Del Rio T.G."/>
            <person name="Tice H."/>
            <person name="Dalin E."/>
            <person name="Bruce D.C."/>
            <person name="Goodwin L."/>
            <person name="Pitluck S."/>
            <person name="Sims D."/>
            <person name="Brettin T.S."/>
            <person name="Detter J.C."/>
            <person name="Han C.S."/>
            <person name="Larimer F."/>
            <person name="Hauser L."/>
            <person name="Land M."/>
            <person name="Ivanova N."/>
            <person name="Richardson P."/>
            <person name="Cavicchioli R."/>
            <person name="DasSarma S."/>
            <person name="Woese C.R."/>
            <person name="Kyrpides N.C."/>
        </authorList>
    </citation>
    <scope>NUCLEOTIDE SEQUENCE [LARGE SCALE GENOMIC DNA]</scope>
    <source>
        <strain>ATCC 49239 / DSM 5036 / JCM 8891 / ACAM 34</strain>
    </source>
</reference>
<protein>
    <recommendedName>
        <fullName evidence="1">Putative HTH-type transcriptional regulatory protein Hlac_0273</fullName>
    </recommendedName>
</protein>
<feature type="chain" id="PRO_1000146936" description="Putative HTH-type transcriptional regulatory protein Hlac_0273">
    <location>
        <begin position="1"/>
        <end position="323"/>
    </location>
</feature>
<feature type="domain" description="HTH cro/C1-type" evidence="1">
    <location>
        <begin position="132"/>
        <end position="189"/>
    </location>
</feature>
<feature type="DNA-binding region" description="H-T-H motif" evidence="1">
    <location>
        <begin position="143"/>
        <end position="162"/>
    </location>
</feature>
<feature type="region of interest" description="Disordered" evidence="2">
    <location>
        <begin position="188"/>
        <end position="211"/>
    </location>
</feature>
<evidence type="ECO:0000255" key="1">
    <source>
        <dbReference type="HAMAP-Rule" id="MF_00584"/>
    </source>
</evidence>
<evidence type="ECO:0000256" key="2">
    <source>
        <dbReference type="SAM" id="MobiDB-lite"/>
    </source>
</evidence>
<keyword id="KW-0238">DNA-binding</keyword>
<keyword id="KW-1185">Reference proteome</keyword>
<keyword id="KW-0804">Transcription</keyword>
<keyword id="KW-0805">Transcription regulation</keyword>
<sequence length="323" mass="35219">MSRTALIENITAMLEDADFLVSDRCAVRPKSFDVAARRDEDLVLLKILGNVDALDAETGAEMRRLGEYLQATPMVIGIRTRDEELKPGVVYFRHGVPVINPDTGYDLFVEGMPPLIYAAPGGLYVSLDGDLLADEREERGWSLGRLATELGVSRRTVSKYEDGMNASIEVAIQLEDLFNEPFSSPVDVLDGAGEVRDADPTPSAPETDPDDEHVLHVLTNAGFTVHPTARAPFKAVSEDEGSSPARVLTGHSTFTPAAEKRARIMSSIGEVARTRSVYFTEENEDRESVDGTALVSCEELADISDPEGIRELIRDRAKAPSEA</sequence>
<organism>
    <name type="scientific">Halorubrum lacusprofundi (strain ATCC 49239 / DSM 5036 / JCM 8891 / ACAM 34)</name>
    <dbReference type="NCBI Taxonomy" id="416348"/>
    <lineage>
        <taxon>Archaea</taxon>
        <taxon>Methanobacteriati</taxon>
        <taxon>Methanobacteriota</taxon>
        <taxon>Stenosarchaea group</taxon>
        <taxon>Halobacteria</taxon>
        <taxon>Halobacteriales</taxon>
        <taxon>Haloferacaceae</taxon>
        <taxon>Halorubrum</taxon>
    </lineage>
</organism>
<gene>
    <name type="ordered locus">Hlac_0273</name>
</gene>
<accession>B9LS33</accession>